<gene>
    <name type="primary">vraB</name>
    <name type="ordered locus">SE_0346</name>
</gene>
<dbReference type="EC" id="2.3.1.-"/>
<dbReference type="EMBL" id="AE015929">
    <property type="protein sequence ID" value="AAO03943.1"/>
    <property type="molecule type" value="Genomic_DNA"/>
</dbReference>
<dbReference type="RefSeq" id="NP_763901.1">
    <property type="nucleotide sequence ID" value="NC_004461.1"/>
</dbReference>
<dbReference type="RefSeq" id="WP_001832124.1">
    <property type="nucleotide sequence ID" value="NZ_WBME01000045.1"/>
</dbReference>
<dbReference type="SMR" id="Q8CTR0"/>
<dbReference type="KEGG" id="sep:SE_0346"/>
<dbReference type="PATRIC" id="fig|176280.10.peg.319"/>
<dbReference type="eggNOG" id="COG0183">
    <property type="taxonomic scope" value="Bacteria"/>
</dbReference>
<dbReference type="HOGENOM" id="CLU_031026_2_1_9"/>
<dbReference type="OrthoDB" id="9764892at2"/>
<dbReference type="Proteomes" id="UP000001411">
    <property type="component" value="Chromosome"/>
</dbReference>
<dbReference type="GO" id="GO:0005737">
    <property type="term" value="C:cytoplasm"/>
    <property type="evidence" value="ECO:0007669"/>
    <property type="project" value="UniProtKB-ARBA"/>
</dbReference>
<dbReference type="GO" id="GO:0003988">
    <property type="term" value="F:acetyl-CoA C-acyltransferase activity"/>
    <property type="evidence" value="ECO:0007669"/>
    <property type="project" value="TreeGrafter"/>
</dbReference>
<dbReference type="GO" id="GO:0006635">
    <property type="term" value="P:fatty acid beta-oxidation"/>
    <property type="evidence" value="ECO:0007669"/>
    <property type="project" value="TreeGrafter"/>
</dbReference>
<dbReference type="GO" id="GO:0010124">
    <property type="term" value="P:phenylacetate catabolic process"/>
    <property type="evidence" value="ECO:0007669"/>
    <property type="project" value="TreeGrafter"/>
</dbReference>
<dbReference type="CDD" id="cd00751">
    <property type="entry name" value="thiolase"/>
    <property type="match status" value="1"/>
</dbReference>
<dbReference type="Gene3D" id="3.40.47.10">
    <property type="match status" value="2"/>
</dbReference>
<dbReference type="InterPro" id="IPR002155">
    <property type="entry name" value="Thiolase"/>
</dbReference>
<dbReference type="InterPro" id="IPR016039">
    <property type="entry name" value="Thiolase-like"/>
</dbReference>
<dbReference type="InterPro" id="IPR050215">
    <property type="entry name" value="Thiolase-like_sf_Thiolase"/>
</dbReference>
<dbReference type="InterPro" id="IPR020617">
    <property type="entry name" value="Thiolase_C"/>
</dbReference>
<dbReference type="InterPro" id="IPR020613">
    <property type="entry name" value="Thiolase_CS"/>
</dbReference>
<dbReference type="InterPro" id="IPR020616">
    <property type="entry name" value="Thiolase_N"/>
</dbReference>
<dbReference type="NCBIfam" id="TIGR01930">
    <property type="entry name" value="AcCoA-C-Actrans"/>
    <property type="match status" value="1"/>
</dbReference>
<dbReference type="PANTHER" id="PTHR43853">
    <property type="entry name" value="3-KETOACYL-COA THIOLASE, PEROXISOMAL"/>
    <property type="match status" value="1"/>
</dbReference>
<dbReference type="PANTHER" id="PTHR43853:SF3">
    <property type="entry name" value="ACETYL-COA C-ACETYLTRANSFERASE YHFS-RELATED"/>
    <property type="match status" value="1"/>
</dbReference>
<dbReference type="Pfam" id="PF02803">
    <property type="entry name" value="Thiolase_C"/>
    <property type="match status" value="1"/>
</dbReference>
<dbReference type="Pfam" id="PF00108">
    <property type="entry name" value="Thiolase_N"/>
    <property type="match status" value="1"/>
</dbReference>
<dbReference type="PIRSF" id="PIRSF000429">
    <property type="entry name" value="Ac-CoA_Ac_transf"/>
    <property type="match status" value="1"/>
</dbReference>
<dbReference type="SUPFAM" id="SSF53901">
    <property type="entry name" value="Thiolase-like"/>
    <property type="match status" value="2"/>
</dbReference>
<dbReference type="PROSITE" id="PS00737">
    <property type="entry name" value="THIOLASE_2"/>
    <property type="match status" value="1"/>
</dbReference>
<keyword id="KW-0012">Acyltransferase</keyword>
<keyword id="KW-0808">Transferase</keyword>
<feature type="chain" id="PRO_0000206432" description="Putative acetyl-CoA C-acetyltransferase VraB">
    <location>
        <begin position="1"/>
        <end position="382"/>
    </location>
</feature>
<feature type="active site" description="Acyl-thioester intermediate" evidence="1">
    <location>
        <position position="86"/>
    </location>
</feature>
<feature type="active site" description="Proton acceptor" evidence="1">
    <location>
        <position position="338"/>
    </location>
</feature>
<reference key="1">
    <citation type="journal article" date="2003" name="Mol. Microbiol.">
        <title>Genome-based analysis of virulence genes in a non-biofilm-forming Staphylococcus epidermidis strain (ATCC 12228).</title>
        <authorList>
            <person name="Zhang Y.-Q."/>
            <person name="Ren S.-X."/>
            <person name="Li H.-L."/>
            <person name="Wang Y.-X."/>
            <person name="Fu G."/>
            <person name="Yang J."/>
            <person name="Qin Z.-Q."/>
            <person name="Miao Y.-G."/>
            <person name="Wang W.-Y."/>
            <person name="Chen R.-S."/>
            <person name="Shen Y."/>
            <person name="Chen Z."/>
            <person name="Yuan Z.-H."/>
            <person name="Zhao G.-P."/>
            <person name="Qu D."/>
            <person name="Danchin A."/>
            <person name="Wen Y.-M."/>
        </authorList>
    </citation>
    <scope>NUCLEOTIDE SEQUENCE [LARGE SCALE GENOMIC DNA]</scope>
    <source>
        <strain>ATCC 12228 / FDA PCI 1200</strain>
    </source>
</reference>
<proteinExistence type="inferred from homology"/>
<organism>
    <name type="scientific">Staphylococcus epidermidis (strain ATCC 12228 / FDA PCI 1200)</name>
    <dbReference type="NCBI Taxonomy" id="176280"/>
    <lineage>
        <taxon>Bacteria</taxon>
        <taxon>Bacillati</taxon>
        <taxon>Bacillota</taxon>
        <taxon>Bacilli</taxon>
        <taxon>Bacillales</taxon>
        <taxon>Staphylococcaceae</taxon>
        <taxon>Staphylococcus</taxon>
    </lineage>
</organism>
<sequence>MKQPVIIAAKRIAFGKYGGRLRHLEPESLLEPLFNHFTDQYPKVMSLLDDVILGNTVGNGGNLARKSLLEAGLDFKIPGITIDRQCGSGLEAVIQACRMVQSGAGTIYIAGGVESTSRAPWKIKRPQSVYESEFPQFFERAPFAREGEDPSMIEAAENVAKKYHISRNEQDDFAYRSHQLASKNMNNGNISQEILPFKVKGEYFNQDESIKPQLTLRTLGRLKPLLNEGTVTVGNSCKKNDGAVLLIVMEENRARQLGFTEGIKFVNSATVGVQPQYLGVGPVPAVNQLLAQERLTINDINAVELNEAFSSQVIASQQQLNIPLNKLNCWGGAIATGHPYGASGAALVTRLFYMKHQFRTIATMGIGGGIGNAALFERWYGN</sequence>
<comment type="similarity">
    <text evidence="2">Belongs to the thiolase-like superfamily. Thiolase family.</text>
</comment>
<name>VRAB_STAES</name>
<evidence type="ECO:0000250" key="1"/>
<evidence type="ECO:0000305" key="2"/>
<accession>Q8CTR0</accession>
<protein>
    <recommendedName>
        <fullName>Putative acetyl-CoA C-acetyltransferase VraB</fullName>
        <ecNumber>2.3.1.-</ecNumber>
    </recommendedName>
</protein>